<protein>
    <recommendedName>
        <fullName evidence="1">Small heat shock protein IbpA</fullName>
    </recommendedName>
    <alternativeName>
        <fullName evidence="1">16 kDa heat shock protein A</fullName>
    </alternativeName>
</protein>
<evidence type="ECO:0000255" key="1">
    <source>
        <dbReference type="HAMAP-Rule" id="MF_02000"/>
    </source>
</evidence>
<evidence type="ECO:0000255" key="2">
    <source>
        <dbReference type="PROSITE-ProRule" id="PRU00285"/>
    </source>
</evidence>
<sequence>MRNSDLAPLYRSAIGFDRLFNLLESGQNQSNGGYPPYNVELVDENNYRIAIAVAGFAEQELEITTQDNLLIVRGSHANEPAQRTYLYQGIAERNFERKFQLAEHIKIKGANLVNGLLYIDLERLVPESLKPRRIEIK</sequence>
<name>IBPA_YERPP</name>
<gene>
    <name evidence="1" type="primary">ibpA</name>
    <name type="ordered locus">YPDSF_0012</name>
</gene>
<accession>A4TGM6</accession>
<keyword id="KW-0143">Chaperone</keyword>
<keyword id="KW-0963">Cytoplasm</keyword>
<keyword id="KW-0346">Stress response</keyword>
<comment type="function">
    <text evidence="1">Associates with aggregated proteins, together with IbpB, to stabilize and protect them from irreversible denaturation and extensive proteolysis during heat shock and oxidative stress. Aggregated proteins bound to the IbpAB complex are more efficiently refolded and reactivated by the ATP-dependent chaperone systems ClpB and DnaK/DnaJ/GrpE. Its activity is ATP-independent.</text>
</comment>
<comment type="subunit">
    <text evidence="1">Monomer. Forms homomultimers of about 100-150 subunits at optimal growth temperatures. Conformation changes to monomers at high temperatures or high ionic concentrations.</text>
</comment>
<comment type="subcellular location">
    <subcellularLocation>
        <location evidence="1">Cytoplasm</location>
    </subcellularLocation>
</comment>
<comment type="similarity">
    <text evidence="1 2">Belongs to the small heat shock protein (HSP20) family.</text>
</comment>
<reference key="1">
    <citation type="submission" date="2007-02" db="EMBL/GenBank/DDBJ databases">
        <title>Complete sequence of chromosome of Yersinia pestis Pestoides F.</title>
        <authorList>
            <consortium name="US DOE Joint Genome Institute"/>
            <person name="Copeland A."/>
            <person name="Lucas S."/>
            <person name="Lapidus A."/>
            <person name="Barry K."/>
            <person name="Detter J.C."/>
            <person name="Glavina del Rio T."/>
            <person name="Hammon N."/>
            <person name="Israni S."/>
            <person name="Dalin E."/>
            <person name="Tice H."/>
            <person name="Pitluck S."/>
            <person name="Di Bartolo G."/>
            <person name="Chain P."/>
            <person name="Malfatti S."/>
            <person name="Shin M."/>
            <person name="Vergez L."/>
            <person name="Schmutz J."/>
            <person name="Larimer F."/>
            <person name="Land M."/>
            <person name="Hauser L."/>
            <person name="Worsham P."/>
            <person name="Chu M."/>
            <person name="Bearden S."/>
            <person name="Garcia E."/>
            <person name="Richardson P."/>
        </authorList>
    </citation>
    <scope>NUCLEOTIDE SEQUENCE [LARGE SCALE GENOMIC DNA]</scope>
    <source>
        <strain>Pestoides F</strain>
    </source>
</reference>
<feature type="chain" id="PRO_1000022029" description="Small heat shock protein IbpA">
    <location>
        <begin position="1"/>
        <end position="137"/>
    </location>
</feature>
<feature type="domain" description="sHSP" evidence="2">
    <location>
        <begin position="28"/>
        <end position="137"/>
    </location>
</feature>
<organism>
    <name type="scientific">Yersinia pestis (strain Pestoides F)</name>
    <dbReference type="NCBI Taxonomy" id="386656"/>
    <lineage>
        <taxon>Bacteria</taxon>
        <taxon>Pseudomonadati</taxon>
        <taxon>Pseudomonadota</taxon>
        <taxon>Gammaproteobacteria</taxon>
        <taxon>Enterobacterales</taxon>
        <taxon>Yersiniaceae</taxon>
        <taxon>Yersinia</taxon>
    </lineage>
</organism>
<proteinExistence type="inferred from homology"/>
<dbReference type="EMBL" id="CP000668">
    <property type="protein sequence ID" value="ABP38439.1"/>
    <property type="molecule type" value="Genomic_DNA"/>
</dbReference>
<dbReference type="RefSeq" id="WP_002209636.1">
    <property type="nucleotide sequence ID" value="NZ_CP009715.1"/>
</dbReference>
<dbReference type="SMR" id="A4TGM6"/>
<dbReference type="GeneID" id="96663430"/>
<dbReference type="KEGG" id="ypp:YPDSF_0012"/>
<dbReference type="PATRIC" id="fig|386656.14.peg.566"/>
<dbReference type="GO" id="GO:0005737">
    <property type="term" value="C:cytoplasm"/>
    <property type="evidence" value="ECO:0007669"/>
    <property type="project" value="UniProtKB-SubCell"/>
</dbReference>
<dbReference type="GO" id="GO:0050821">
    <property type="term" value="P:protein stabilization"/>
    <property type="evidence" value="ECO:0007669"/>
    <property type="project" value="UniProtKB-UniRule"/>
</dbReference>
<dbReference type="CDD" id="cd06470">
    <property type="entry name" value="ACD_IbpA-B_like"/>
    <property type="match status" value="1"/>
</dbReference>
<dbReference type="FunFam" id="2.60.40.790:FF:000002">
    <property type="entry name" value="Small heat shock protein IbpA"/>
    <property type="match status" value="1"/>
</dbReference>
<dbReference type="Gene3D" id="2.60.40.790">
    <property type="match status" value="1"/>
</dbReference>
<dbReference type="HAMAP" id="MF_02000">
    <property type="entry name" value="HSP20_IbpA"/>
    <property type="match status" value="1"/>
</dbReference>
<dbReference type="InterPro" id="IPR002068">
    <property type="entry name" value="A-crystallin/Hsp20_dom"/>
</dbReference>
<dbReference type="InterPro" id="IPR037913">
    <property type="entry name" value="ACD_IbpA/B"/>
</dbReference>
<dbReference type="InterPro" id="IPR008978">
    <property type="entry name" value="HSP20-like_chaperone"/>
</dbReference>
<dbReference type="InterPro" id="IPR023728">
    <property type="entry name" value="HSP20_IbpA"/>
</dbReference>
<dbReference type="NCBIfam" id="NF008013">
    <property type="entry name" value="PRK10743.1"/>
    <property type="match status" value="1"/>
</dbReference>
<dbReference type="PANTHER" id="PTHR47062">
    <property type="match status" value="1"/>
</dbReference>
<dbReference type="PANTHER" id="PTHR47062:SF1">
    <property type="entry name" value="SMALL HEAT SHOCK PROTEIN IBPA"/>
    <property type="match status" value="1"/>
</dbReference>
<dbReference type="Pfam" id="PF00011">
    <property type="entry name" value="HSP20"/>
    <property type="match status" value="1"/>
</dbReference>
<dbReference type="SUPFAM" id="SSF49764">
    <property type="entry name" value="HSP20-like chaperones"/>
    <property type="match status" value="1"/>
</dbReference>
<dbReference type="PROSITE" id="PS01031">
    <property type="entry name" value="SHSP"/>
    <property type="match status" value="1"/>
</dbReference>